<dbReference type="EC" id="4.2.3.4" evidence="1"/>
<dbReference type="EMBL" id="CP001164">
    <property type="protein sequence ID" value="ACI36300.1"/>
    <property type="molecule type" value="Genomic_DNA"/>
</dbReference>
<dbReference type="RefSeq" id="WP_000439863.1">
    <property type="nucleotide sequence ID" value="NC_011353.1"/>
</dbReference>
<dbReference type="SMR" id="B5YTT8"/>
<dbReference type="KEGG" id="ecf:ECH74115_4693"/>
<dbReference type="HOGENOM" id="CLU_001201_0_2_6"/>
<dbReference type="UniPathway" id="UPA00053">
    <property type="reaction ID" value="UER00085"/>
</dbReference>
<dbReference type="GO" id="GO:0005737">
    <property type="term" value="C:cytoplasm"/>
    <property type="evidence" value="ECO:0007669"/>
    <property type="project" value="UniProtKB-SubCell"/>
</dbReference>
<dbReference type="GO" id="GO:0003856">
    <property type="term" value="F:3-dehydroquinate synthase activity"/>
    <property type="evidence" value="ECO:0007669"/>
    <property type="project" value="UniProtKB-UniRule"/>
</dbReference>
<dbReference type="GO" id="GO:0046872">
    <property type="term" value="F:metal ion binding"/>
    <property type="evidence" value="ECO:0007669"/>
    <property type="project" value="UniProtKB-KW"/>
</dbReference>
<dbReference type="GO" id="GO:0000166">
    <property type="term" value="F:nucleotide binding"/>
    <property type="evidence" value="ECO:0007669"/>
    <property type="project" value="UniProtKB-KW"/>
</dbReference>
<dbReference type="GO" id="GO:0008652">
    <property type="term" value="P:amino acid biosynthetic process"/>
    <property type="evidence" value="ECO:0007669"/>
    <property type="project" value="UniProtKB-KW"/>
</dbReference>
<dbReference type="GO" id="GO:0009073">
    <property type="term" value="P:aromatic amino acid family biosynthetic process"/>
    <property type="evidence" value="ECO:0007669"/>
    <property type="project" value="UniProtKB-KW"/>
</dbReference>
<dbReference type="GO" id="GO:0009423">
    <property type="term" value="P:chorismate biosynthetic process"/>
    <property type="evidence" value="ECO:0007669"/>
    <property type="project" value="UniProtKB-UniRule"/>
</dbReference>
<dbReference type="CDD" id="cd08195">
    <property type="entry name" value="DHQS"/>
    <property type="match status" value="1"/>
</dbReference>
<dbReference type="FunFam" id="1.20.1090.10:FF:000002">
    <property type="entry name" value="3-dehydroquinate synthase"/>
    <property type="match status" value="1"/>
</dbReference>
<dbReference type="FunFam" id="3.40.50.1970:FF:000001">
    <property type="entry name" value="3-dehydroquinate synthase"/>
    <property type="match status" value="1"/>
</dbReference>
<dbReference type="Gene3D" id="3.40.50.1970">
    <property type="match status" value="1"/>
</dbReference>
<dbReference type="Gene3D" id="1.20.1090.10">
    <property type="entry name" value="Dehydroquinate synthase-like - alpha domain"/>
    <property type="match status" value="1"/>
</dbReference>
<dbReference type="HAMAP" id="MF_00110">
    <property type="entry name" value="DHQ_synthase"/>
    <property type="match status" value="1"/>
</dbReference>
<dbReference type="InterPro" id="IPR050071">
    <property type="entry name" value="Dehydroquinate_synthase"/>
</dbReference>
<dbReference type="InterPro" id="IPR016037">
    <property type="entry name" value="DHQ_synth_AroB"/>
</dbReference>
<dbReference type="InterPro" id="IPR030963">
    <property type="entry name" value="DHQ_synth_fam"/>
</dbReference>
<dbReference type="InterPro" id="IPR030960">
    <property type="entry name" value="DHQS/DOIS_N"/>
</dbReference>
<dbReference type="InterPro" id="IPR056179">
    <property type="entry name" value="DHQS_C"/>
</dbReference>
<dbReference type="NCBIfam" id="TIGR01357">
    <property type="entry name" value="aroB"/>
    <property type="match status" value="1"/>
</dbReference>
<dbReference type="PANTHER" id="PTHR43622">
    <property type="entry name" value="3-DEHYDROQUINATE SYNTHASE"/>
    <property type="match status" value="1"/>
</dbReference>
<dbReference type="PANTHER" id="PTHR43622:SF7">
    <property type="entry name" value="3-DEHYDROQUINATE SYNTHASE, CHLOROPLASTIC"/>
    <property type="match status" value="1"/>
</dbReference>
<dbReference type="Pfam" id="PF01761">
    <property type="entry name" value="DHQ_synthase"/>
    <property type="match status" value="1"/>
</dbReference>
<dbReference type="Pfam" id="PF24621">
    <property type="entry name" value="DHQS_C"/>
    <property type="match status" value="1"/>
</dbReference>
<dbReference type="PIRSF" id="PIRSF001455">
    <property type="entry name" value="DHQ_synth"/>
    <property type="match status" value="1"/>
</dbReference>
<dbReference type="SUPFAM" id="SSF56796">
    <property type="entry name" value="Dehydroquinate synthase-like"/>
    <property type="match status" value="1"/>
</dbReference>
<evidence type="ECO:0000255" key="1">
    <source>
        <dbReference type="HAMAP-Rule" id="MF_00110"/>
    </source>
</evidence>
<keyword id="KW-0028">Amino-acid biosynthesis</keyword>
<keyword id="KW-0057">Aromatic amino acid biosynthesis</keyword>
<keyword id="KW-0170">Cobalt</keyword>
<keyword id="KW-0963">Cytoplasm</keyword>
<keyword id="KW-0456">Lyase</keyword>
<keyword id="KW-0479">Metal-binding</keyword>
<keyword id="KW-0520">NAD</keyword>
<keyword id="KW-0547">Nucleotide-binding</keyword>
<keyword id="KW-0862">Zinc</keyword>
<feature type="chain" id="PRO_1000094506" description="3-dehydroquinate synthase">
    <location>
        <begin position="1"/>
        <end position="362"/>
    </location>
</feature>
<feature type="binding site" evidence="1">
    <location>
        <begin position="71"/>
        <end position="76"/>
    </location>
    <ligand>
        <name>NAD(+)</name>
        <dbReference type="ChEBI" id="CHEBI:57540"/>
    </ligand>
</feature>
<feature type="binding site" evidence="1">
    <location>
        <begin position="105"/>
        <end position="109"/>
    </location>
    <ligand>
        <name>NAD(+)</name>
        <dbReference type="ChEBI" id="CHEBI:57540"/>
    </ligand>
</feature>
<feature type="binding site" evidence="1">
    <location>
        <begin position="129"/>
        <end position="130"/>
    </location>
    <ligand>
        <name>NAD(+)</name>
        <dbReference type="ChEBI" id="CHEBI:57540"/>
    </ligand>
</feature>
<feature type="binding site" evidence="1">
    <location>
        <position position="142"/>
    </location>
    <ligand>
        <name>NAD(+)</name>
        <dbReference type="ChEBI" id="CHEBI:57540"/>
    </ligand>
</feature>
<feature type="binding site" evidence="1">
    <location>
        <position position="151"/>
    </location>
    <ligand>
        <name>NAD(+)</name>
        <dbReference type="ChEBI" id="CHEBI:57540"/>
    </ligand>
</feature>
<feature type="binding site" evidence="1">
    <location>
        <begin position="169"/>
        <end position="172"/>
    </location>
    <ligand>
        <name>NAD(+)</name>
        <dbReference type="ChEBI" id="CHEBI:57540"/>
    </ligand>
</feature>
<feature type="binding site" evidence="1">
    <location>
        <position position="184"/>
    </location>
    <ligand>
        <name>Zn(2+)</name>
        <dbReference type="ChEBI" id="CHEBI:29105"/>
    </ligand>
</feature>
<feature type="binding site" evidence="1">
    <location>
        <position position="247"/>
    </location>
    <ligand>
        <name>Zn(2+)</name>
        <dbReference type="ChEBI" id="CHEBI:29105"/>
    </ligand>
</feature>
<feature type="binding site" evidence="1">
    <location>
        <position position="264"/>
    </location>
    <ligand>
        <name>Zn(2+)</name>
        <dbReference type="ChEBI" id="CHEBI:29105"/>
    </ligand>
</feature>
<protein>
    <recommendedName>
        <fullName evidence="1">3-dehydroquinate synthase</fullName>
        <shortName evidence="1">DHQS</shortName>
        <ecNumber evidence="1">4.2.3.4</ecNumber>
    </recommendedName>
</protein>
<proteinExistence type="inferred from homology"/>
<accession>B5YTT8</accession>
<reference key="1">
    <citation type="journal article" date="2011" name="Proc. Natl. Acad. Sci. U.S.A.">
        <title>Genomic anatomy of Escherichia coli O157:H7 outbreaks.</title>
        <authorList>
            <person name="Eppinger M."/>
            <person name="Mammel M.K."/>
            <person name="Leclerc J.E."/>
            <person name="Ravel J."/>
            <person name="Cebula T.A."/>
        </authorList>
    </citation>
    <scope>NUCLEOTIDE SEQUENCE [LARGE SCALE GENOMIC DNA]</scope>
    <source>
        <strain>EC4115 / EHEC</strain>
    </source>
</reference>
<sequence>MERIVVTLGERSYPITIASGLFNEPASFLPLKSGEQVMLVTNETLAPLYLDKVRGVLEQAGVNVDSVILPDGEQYKSLAVLDTVFTALLQKPHGRDTTLVALGGGVVGDLTGFAAASYQRGVRFIQVPTTLLSQVDSSVGGKTAVNHPLGKNMIGAFYQPASVVVDLDCLKTLPPRELASGLAEVIKYGIILDGTFFNWLEENLDALLRLDGPAMAYCIRRCCELKAEVVAADERETGLRALLNLGHTFGHAIEAEMGYGNWLHGEAVAAGMVMAARTSERLGQFSSAETQRIITLLTRAGLPVNGPREMSAQAYLPHMLRDKKVLAGEMRLILPLAIGKSEVRSGVSHELVLNAIADCQSA</sequence>
<gene>
    <name evidence="1" type="primary">aroB</name>
    <name type="ordered locus">ECH74115_4693</name>
</gene>
<organism>
    <name type="scientific">Escherichia coli O157:H7 (strain EC4115 / EHEC)</name>
    <dbReference type="NCBI Taxonomy" id="444450"/>
    <lineage>
        <taxon>Bacteria</taxon>
        <taxon>Pseudomonadati</taxon>
        <taxon>Pseudomonadota</taxon>
        <taxon>Gammaproteobacteria</taxon>
        <taxon>Enterobacterales</taxon>
        <taxon>Enterobacteriaceae</taxon>
        <taxon>Escherichia</taxon>
    </lineage>
</organism>
<name>AROB_ECO5E</name>
<comment type="function">
    <text evidence="1">Catalyzes the conversion of 3-deoxy-D-arabino-heptulosonate 7-phosphate (DAHP) to dehydroquinate (DHQ).</text>
</comment>
<comment type="catalytic activity">
    <reaction evidence="1">
        <text>7-phospho-2-dehydro-3-deoxy-D-arabino-heptonate = 3-dehydroquinate + phosphate</text>
        <dbReference type="Rhea" id="RHEA:21968"/>
        <dbReference type="ChEBI" id="CHEBI:32364"/>
        <dbReference type="ChEBI" id="CHEBI:43474"/>
        <dbReference type="ChEBI" id="CHEBI:58394"/>
        <dbReference type="EC" id="4.2.3.4"/>
    </reaction>
</comment>
<comment type="cofactor">
    <cofactor evidence="1">
        <name>Co(2+)</name>
        <dbReference type="ChEBI" id="CHEBI:48828"/>
    </cofactor>
    <cofactor evidence="1">
        <name>Zn(2+)</name>
        <dbReference type="ChEBI" id="CHEBI:29105"/>
    </cofactor>
    <text evidence="1">Binds 1 divalent metal cation per subunit. Can use either Co(2+) or Zn(2+).</text>
</comment>
<comment type="cofactor">
    <cofactor evidence="1">
        <name>NAD(+)</name>
        <dbReference type="ChEBI" id="CHEBI:57540"/>
    </cofactor>
</comment>
<comment type="pathway">
    <text evidence="1">Metabolic intermediate biosynthesis; chorismate biosynthesis; chorismate from D-erythrose 4-phosphate and phosphoenolpyruvate: step 2/7.</text>
</comment>
<comment type="subcellular location">
    <subcellularLocation>
        <location evidence="1">Cytoplasm</location>
    </subcellularLocation>
</comment>
<comment type="similarity">
    <text evidence="1">Belongs to the sugar phosphate cyclases superfamily. Dehydroquinate synthase family.</text>
</comment>